<sequence>MERRLVVTLQCLVLLYLAPECGGTDQCDNFPQMLRDLRDAFSRVKTFFQTKDEVDNLLLKESLLEDFKGYLGCQALSEMIQFYLEEVMPQAENQDPEAKDHVNSLGENLKTLRLRLRRCHRFLPCENKSKAVEQIKNAFNKLQEKGIYKAMSEFDIFINYIEAYMTIKAR</sequence>
<evidence type="ECO:0000250" key="1"/>
<evidence type="ECO:0000255" key="2"/>
<evidence type="ECO:0000305" key="3"/>
<proteinExistence type="inferred from homology"/>
<dbReference type="EMBL" id="DQ279927">
    <property type="protein sequence ID" value="ABB89220.1"/>
    <property type="molecule type" value="Genomic_DNA"/>
</dbReference>
<dbReference type="RefSeq" id="YP_001129439.1">
    <property type="nucleotide sequence ID" value="NC_009334.1"/>
</dbReference>
<dbReference type="RefSeq" id="YP_401634.1">
    <property type="nucleotide sequence ID" value="NC_007605.1"/>
</dbReference>
<dbReference type="SMR" id="P0C6Z6"/>
<dbReference type="IntAct" id="P0C6Z6">
    <property type="interactions" value="5"/>
</dbReference>
<dbReference type="MINT" id="P0C6Z6"/>
<dbReference type="DNASU" id="3783689"/>
<dbReference type="GeneID" id="3783689"/>
<dbReference type="KEGG" id="vg:3783689"/>
<dbReference type="KEGG" id="vg:5176163"/>
<dbReference type="Proteomes" id="UP000007639">
    <property type="component" value="Genome"/>
</dbReference>
<dbReference type="GO" id="GO:0005615">
    <property type="term" value="C:extracellular space"/>
    <property type="evidence" value="ECO:0007669"/>
    <property type="project" value="UniProtKB-KW"/>
</dbReference>
<dbReference type="GO" id="GO:0005125">
    <property type="term" value="F:cytokine activity"/>
    <property type="evidence" value="ECO:0007669"/>
    <property type="project" value="UniProtKB-KW"/>
</dbReference>
<dbReference type="GO" id="GO:0006955">
    <property type="term" value="P:immune response"/>
    <property type="evidence" value="ECO:0007669"/>
    <property type="project" value="InterPro"/>
</dbReference>
<dbReference type="GO" id="GO:0001817">
    <property type="term" value="P:regulation of cytokine production"/>
    <property type="evidence" value="ECO:0007669"/>
    <property type="project" value="UniProtKB-ARBA"/>
</dbReference>
<dbReference type="FunFam" id="1.20.1250.10:FF:000011">
    <property type="entry name" value="Interleukin-10"/>
    <property type="match status" value="1"/>
</dbReference>
<dbReference type="Gene3D" id="1.20.1250.10">
    <property type="match status" value="1"/>
</dbReference>
<dbReference type="InterPro" id="IPR009079">
    <property type="entry name" value="4_helix_cytokine-like_core"/>
</dbReference>
<dbReference type="InterPro" id="IPR000098">
    <property type="entry name" value="IL-10"/>
</dbReference>
<dbReference type="InterPro" id="IPR020443">
    <property type="entry name" value="IL-10/19/20/24/26"/>
</dbReference>
<dbReference type="InterPro" id="IPR020423">
    <property type="entry name" value="IL-10_CS"/>
</dbReference>
<dbReference type="PANTHER" id="PTHR48482:SF5">
    <property type="entry name" value="INTERLEUKIN-10"/>
    <property type="match status" value="1"/>
</dbReference>
<dbReference type="PANTHER" id="PTHR48482">
    <property type="entry name" value="INTERLEUKIN-19-RELATED"/>
    <property type="match status" value="1"/>
</dbReference>
<dbReference type="Pfam" id="PF00726">
    <property type="entry name" value="IL10"/>
    <property type="match status" value="1"/>
</dbReference>
<dbReference type="PRINTS" id="PR01294">
    <property type="entry name" value="INTRLEUKIN10"/>
</dbReference>
<dbReference type="SMART" id="SM00188">
    <property type="entry name" value="IL10"/>
    <property type="match status" value="1"/>
</dbReference>
<dbReference type="SUPFAM" id="SSF47266">
    <property type="entry name" value="4-helical cytokines"/>
    <property type="match status" value="1"/>
</dbReference>
<dbReference type="PROSITE" id="PS00520">
    <property type="entry name" value="INTERLEUKIN_10"/>
    <property type="match status" value="1"/>
</dbReference>
<reference key="1">
    <citation type="journal article" date="2006" name="Virology">
        <title>The genome of Epstein-Barr virus type 2 strain AG876.</title>
        <authorList>
            <person name="Dolan A."/>
            <person name="Addison C."/>
            <person name="Gatherer D."/>
            <person name="Davison A.J."/>
            <person name="McGeoch D.J."/>
        </authorList>
    </citation>
    <scope>NUCLEOTIDE SEQUENCE [LARGE SCALE GENOMIC DNA]</scope>
</reference>
<protein>
    <recommendedName>
        <fullName>Viral interleukin-10 homolog</fullName>
        <shortName>vIL-10</shortName>
    </recommendedName>
    <alternativeName>
        <fullName>20 kDa protein</fullName>
    </alternativeName>
    <alternativeName>
        <fullName>Protein BCRF1</fullName>
    </alternativeName>
</protein>
<feature type="signal peptide" evidence="2">
    <location>
        <begin position="1"/>
        <end position="23"/>
    </location>
</feature>
<feature type="chain" id="PRO_0000375955" description="Viral interleukin-10 homolog">
    <location>
        <begin position="24"/>
        <end position="170"/>
    </location>
</feature>
<feature type="coiled-coil region" evidence="2">
    <location>
        <begin position="97"/>
        <end position="145"/>
    </location>
</feature>
<feature type="glycosylation site" description="N-linked (GlcNAc...) asparagine; by host" evidence="2">
    <location>
        <position position="127"/>
    </location>
</feature>
<feature type="disulfide bond" evidence="1">
    <location>
        <begin position="27"/>
        <end position="119"/>
    </location>
</feature>
<feature type="disulfide bond" evidence="1">
    <location>
        <begin position="73"/>
        <end position="125"/>
    </location>
</feature>
<keyword id="KW-0175">Coiled coil</keyword>
<keyword id="KW-0202">Cytokine</keyword>
<keyword id="KW-1015">Disulfide bond</keyword>
<keyword id="KW-1125">Evasion of host immunity by viral interleukin-like protein</keyword>
<keyword id="KW-0325">Glycoprotein</keyword>
<keyword id="KW-0945">Host-virus interaction</keyword>
<keyword id="KW-1185">Reference proteome</keyword>
<keyword id="KW-0964">Secreted</keyword>
<keyword id="KW-0732">Signal</keyword>
<keyword id="KW-0899">Viral immunoevasion</keyword>
<accession>P0C6Z6</accession>
<accession>Q777H2</accession>
<organism>
    <name type="scientific">Epstein-Barr virus (strain AG876)</name>
    <name type="common">HHV-4</name>
    <name type="synonym">Human herpesvirus 4</name>
    <dbReference type="NCBI Taxonomy" id="82830"/>
    <lineage>
        <taxon>Viruses</taxon>
        <taxon>Duplodnaviria</taxon>
        <taxon>Heunggongvirae</taxon>
        <taxon>Peploviricota</taxon>
        <taxon>Herviviricetes</taxon>
        <taxon>Herpesvirales</taxon>
        <taxon>Orthoherpesviridae</taxon>
        <taxon>Gammaherpesvirinae</taxon>
        <taxon>Lymphocryptovirus</taxon>
        <taxon>Lymphocryptovirus humangamma4</taxon>
        <taxon>Epstein-Barr virus (strain GD1)</taxon>
    </lineage>
</organism>
<name>IL10H_EBVA8</name>
<gene>
    <name type="ORF">BCRF1</name>
</gene>
<organismHost>
    <name type="scientific">Homo sapiens</name>
    <name type="common">Human</name>
    <dbReference type="NCBI Taxonomy" id="9606"/>
</organismHost>
<comment type="function">
    <text evidence="1">Inhibits IFN-gamma synthesis. Down-regulates the expression of the host TAP1 gene (transporter associated with antigen processing), thereby affecting the transport of peptides into the endoplasmic reticulum and subsequent peptide loading by MHC class I molecules. In consequence, infected cells are masked for immune recognition by cytotoxic T-lymphocytes (By similarity).</text>
</comment>
<comment type="subunit">
    <text evidence="1">Homodimer.</text>
</comment>
<comment type="subcellular location">
    <subcellularLocation>
        <location evidence="3">Secreted</location>
    </subcellularLocation>
</comment>
<comment type="similarity">
    <text evidence="3">Belongs to the IL-10 family.</text>
</comment>
<comment type="caution">
    <text evidence="3">Be careful of the possible confusion between BCRF1 with BcRF1.</text>
</comment>